<evidence type="ECO:0000255" key="1">
    <source>
        <dbReference type="HAMAP-Rule" id="MF_00011"/>
    </source>
</evidence>
<comment type="function">
    <text evidence="1">Plays an important role in the de novo pathway of purine nucleotide biosynthesis. Catalyzes the first committed step in the biosynthesis of AMP from IMP.</text>
</comment>
<comment type="catalytic activity">
    <reaction evidence="1">
        <text>IMP + L-aspartate + GTP = N(6)-(1,2-dicarboxyethyl)-AMP + GDP + phosphate + 2 H(+)</text>
        <dbReference type="Rhea" id="RHEA:15753"/>
        <dbReference type="ChEBI" id="CHEBI:15378"/>
        <dbReference type="ChEBI" id="CHEBI:29991"/>
        <dbReference type="ChEBI" id="CHEBI:37565"/>
        <dbReference type="ChEBI" id="CHEBI:43474"/>
        <dbReference type="ChEBI" id="CHEBI:57567"/>
        <dbReference type="ChEBI" id="CHEBI:58053"/>
        <dbReference type="ChEBI" id="CHEBI:58189"/>
        <dbReference type="EC" id="6.3.4.4"/>
    </reaction>
</comment>
<comment type="cofactor">
    <cofactor evidence="1">
        <name>Mg(2+)</name>
        <dbReference type="ChEBI" id="CHEBI:18420"/>
    </cofactor>
    <text evidence="1">Binds 1 Mg(2+) ion per subunit.</text>
</comment>
<comment type="pathway">
    <text evidence="1">Purine metabolism; AMP biosynthesis via de novo pathway; AMP from IMP: step 1/2.</text>
</comment>
<comment type="subunit">
    <text evidence="1">Homodimer.</text>
</comment>
<comment type="subcellular location">
    <subcellularLocation>
        <location evidence="1">Cytoplasm</location>
    </subcellularLocation>
</comment>
<comment type="similarity">
    <text evidence="1">Belongs to the adenylosuccinate synthetase family.</text>
</comment>
<dbReference type="EC" id="6.3.4.4" evidence="1"/>
<dbReference type="EMBL" id="CP001099">
    <property type="protein sequence ID" value="ACF10644.1"/>
    <property type="molecule type" value="Genomic_DNA"/>
</dbReference>
<dbReference type="RefSeq" id="WP_012501478.1">
    <property type="nucleotide sequence ID" value="NC_011027.1"/>
</dbReference>
<dbReference type="SMR" id="B3QQZ0"/>
<dbReference type="STRING" id="517417.Cpar_0217"/>
<dbReference type="KEGG" id="cpc:Cpar_0217"/>
<dbReference type="eggNOG" id="COG0104">
    <property type="taxonomic scope" value="Bacteria"/>
</dbReference>
<dbReference type="HOGENOM" id="CLU_029848_0_0_10"/>
<dbReference type="OrthoDB" id="9807553at2"/>
<dbReference type="UniPathway" id="UPA00075">
    <property type="reaction ID" value="UER00335"/>
</dbReference>
<dbReference type="Proteomes" id="UP000008811">
    <property type="component" value="Chromosome"/>
</dbReference>
<dbReference type="GO" id="GO:0005737">
    <property type="term" value="C:cytoplasm"/>
    <property type="evidence" value="ECO:0007669"/>
    <property type="project" value="UniProtKB-SubCell"/>
</dbReference>
<dbReference type="GO" id="GO:0004019">
    <property type="term" value="F:adenylosuccinate synthase activity"/>
    <property type="evidence" value="ECO:0007669"/>
    <property type="project" value="UniProtKB-UniRule"/>
</dbReference>
<dbReference type="GO" id="GO:0005525">
    <property type="term" value="F:GTP binding"/>
    <property type="evidence" value="ECO:0007669"/>
    <property type="project" value="UniProtKB-UniRule"/>
</dbReference>
<dbReference type="GO" id="GO:0000287">
    <property type="term" value="F:magnesium ion binding"/>
    <property type="evidence" value="ECO:0007669"/>
    <property type="project" value="UniProtKB-UniRule"/>
</dbReference>
<dbReference type="GO" id="GO:0044208">
    <property type="term" value="P:'de novo' AMP biosynthetic process"/>
    <property type="evidence" value="ECO:0007669"/>
    <property type="project" value="UniProtKB-UniRule"/>
</dbReference>
<dbReference type="GO" id="GO:0046040">
    <property type="term" value="P:IMP metabolic process"/>
    <property type="evidence" value="ECO:0007669"/>
    <property type="project" value="TreeGrafter"/>
</dbReference>
<dbReference type="CDD" id="cd03108">
    <property type="entry name" value="AdSS"/>
    <property type="match status" value="1"/>
</dbReference>
<dbReference type="FunFam" id="1.10.300.10:FF:000001">
    <property type="entry name" value="Adenylosuccinate synthetase"/>
    <property type="match status" value="1"/>
</dbReference>
<dbReference type="FunFam" id="3.90.170.10:FF:000001">
    <property type="entry name" value="Adenylosuccinate synthetase"/>
    <property type="match status" value="1"/>
</dbReference>
<dbReference type="Gene3D" id="3.40.440.10">
    <property type="entry name" value="Adenylosuccinate Synthetase, subunit A, domain 1"/>
    <property type="match status" value="1"/>
</dbReference>
<dbReference type="Gene3D" id="1.10.300.10">
    <property type="entry name" value="Adenylosuccinate Synthetase, subunit A, domain 2"/>
    <property type="match status" value="1"/>
</dbReference>
<dbReference type="Gene3D" id="3.90.170.10">
    <property type="entry name" value="Adenylosuccinate Synthetase, subunit A, domain 3"/>
    <property type="match status" value="1"/>
</dbReference>
<dbReference type="HAMAP" id="MF_00011">
    <property type="entry name" value="Adenylosucc_synth"/>
    <property type="match status" value="1"/>
</dbReference>
<dbReference type="InterPro" id="IPR018220">
    <property type="entry name" value="Adenylosuccin_syn_GTP-bd"/>
</dbReference>
<dbReference type="InterPro" id="IPR033128">
    <property type="entry name" value="Adenylosuccin_syn_Lys_AS"/>
</dbReference>
<dbReference type="InterPro" id="IPR042109">
    <property type="entry name" value="Adenylosuccinate_synth_dom1"/>
</dbReference>
<dbReference type="InterPro" id="IPR042110">
    <property type="entry name" value="Adenylosuccinate_synth_dom2"/>
</dbReference>
<dbReference type="InterPro" id="IPR042111">
    <property type="entry name" value="Adenylosuccinate_synth_dom3"/>
</dbReference>
<dbReference type="InterPro" id="IPR001114">
    <property type="entry name" value="Adenylosuccinate_synthetase"/>
</dbReference>
<dbReference type="InterPro" id="IPR027417">
    <property type="entry name" value="P-loop_NTPase"/>
</dbReference>
<dbReference type="NCBIfam" id="NF002223">
    <property type="entry name" value="PRK01117.1"/>
    <property type="match status" value="1"/>
</dbReference>
<dbReference type="NCBIfam" id="TIGR00184">
    <property type="entry name" value="purA"/>
    <property type="match status" value="1"/>
</dbReference>
<dbReference type="PANTHER" id="PTHR11846">
    <property type="entry name" value="ADENYLOSUCCINATE SYNTHETASE"/>
    <property type="match status" value="1"/>
</dbReference>
<dbReference type="PANTHER" id="PTHR11846:SF0">
    <property type="entry name" value="ADENYLOSUCCINATE SYNTHETASE"/>
    <property type="match status" value="1"/>
</dbReference>
<dbReference type="Pfam" id="PF00709">
    <property type="entry name" value="Adenylsucc_synt"/>
    <property type="match status" value="1"/>
</dbReference>
<dbReference type="SMART" id="SM00788">
    <property type="entry name" value="Adenylsucc_synt"/>
    <property type="match status" value="1"/>
</dbReference>
<dbReference type="SUPFAM" id="SSF52540">
    <property type="entry name" value="P-loop containing nucleoside triphosphate hydrolases"/>
    <property type="match status" value="1"/>
</dbReference>
<dbReference type="PROSITE" id="PS01266">
    <property type="entry name" value="ADENYLOSUCCIN_SYN_1"/>
    <property type="match status" value="1"/>
</dbReference>
<dbReference type="PROSITE" id="PS00513">
    <property type="entry name" value="ADENYLOSUCCIN_SYN_2"/>
    <property type="match status" value="1"/>
</dbReference>
<proteinExistence type="inferred from homology"/>
<sequence>MEERTFSRPAASATVLVGTQFGDEGKGKLVDYLSDQYDIVVRYQGGANAGHTICFDGKTVVLHLIPSGIFNKDCICVIGNGVVIDPNALMEEIQKVEELGYDVKGRLFISHNAHLIMPYHKRLDSLSESCLSGDQKIGTTGRGIGPSYEDKFARHGIRVVDLLNPKVLEEKLRDNIEAKNKLICKVYEKEEIDVDAIIGEYEAFDKVIDPYVTNTQLYLNRQIKAGKTVLLEGAQGCLLDVDHGTYPFVTSSNPTSGGACTGSGVAPNHIGKVIGVCKAYMTRVGNGDFPTELEDETGEKLGEIGHEFGATTGRKRRCGWLDLVALRYSLTISGVTELALTKLDVLDTFEEIKVCTSYMLDGKEIFDFPTEHQTLCRVQPVYKSLKGWMASNANAKSFAEMHPNAQAYVNFLEEATGVPVTFISVGPGRDETVFK</sequence>
<reference key="1">
    <citation type="submission" date="2008-06" db="EMBL/GenBank/DDBJ databases">
        <title>Complete sequence of Chlorobaculum parvum NCIB 8327.</title>
        <authorList>
            <consortium name="US DOE Joint Genome Institute"/>
            <person name="Lucas S."/>
            <person name="Copeland A."/>
            <person name="Lapidus A."/>
            <person name="Glavina del Rio T."/>
            <person name="Dalin E."/>
            <person name="Tice H."/>
            <person name="Bruce D."/>
            <person name="Goodwin L."/>
            <person name="Pitluck S."/>
            <person name="Schmutz J."/>
            <person name="Larimer F."/>
            <person name="Land M."/>
            <person name="Hauser L."/>
            <person name="Kyrpides N."/>
            <person name="Mikhailova N."/>
            <person name="Zhao F."/>
            <person name="Li T."/>
            <person name="Liu Z."/>
            <person name="Overmann J."/>
            <person name="Bryant D.A."/>
            <person name="Richardson P."/>
        </authorList>
    </citation>
    <scope>NUCLEOTIDE SEQUENCE [LARGE SCALE GENOMIC DNA]</scope>
    <source>
        <strain>DSM 263 / NCIMB 8327</strain>
    </source>
</reference>
<protein>
    <recommendedName>
        <fullName evidence="1">Adenylosuccinate synthetase</fullName>
        <shortName evidence="1">AMPSase</shortName>
        <shortName evidence="1">AdSS</shortName>
        <ecNumber evidence="1">6.3.4.4</ecNumber>
    </recommendedName>
    <alternativeName>
        <fullName evidence="1">IMP--aspartate ligase</fullName>
    </alternativeName>
</protein>
<keyword id="KW-0963">Cytoplasm</keyword>
<keyword id="KW-0342">GTP-binding</keyword>
<keyword id="KW-0436">Ligase</keyword>
<keyword id="KW-0460">Magnesium</keyword>
<keyword id="KW-0479">Metal-binding</keyword>
<keyword id="KW-0547">Nucleotide-binding</keyword>
<keyword id="KW-0658">Purine biosynthesis</keyword>
<accession>B3QQZ0</accession>
<gene>
    <name evidence="1" type="primary">purA</name>
    <name type="ordered locus">Cpar_0217</name>
</gene>
<feature type="chain" id="PRO_1000089277" description="Adenylosuccinate synthetase">
    <location>
        <begin position="1"/>
        <end position="435"/>
    </location>
</feature>
<feature type="active site" description="Proton acceptor" evidence="1">
    <location>
        <position position="23"/>
    </location>
</feature>
<feature type="active site" description="Proton donor" evidence="1">
    <location>
        <position position="51"/>
    </location>
</feature>
<feature type="binding site" evidence="1">
    <location>
        <begin position="22"/>
        <end position="28"/>
    </location>
    <ligand>
        <name>GTP</name>
        <dbReference type="ChEBI" id="CHEBI:37565"/>
    </ligand>
</feature>
<feature type="binding site" description="in other chain" evidence="1">
    <location>
        <begin position="23"/>
        <end position="26"/>
    </location>
    <ligand>
        <name>IMP</name>
        <dbReference type="ChEBI" id="CHEBI:58053"/>
        <note>ligand shared between dimeric partners</note>
    </ligand>
</feature>
<feature type="binding site" evidence="1">
    <location>
        <position position="23"/>
    </location>
    <ligand>
        <name>Mg(2+)</name>
        <dbReference type="ChEBI" id="CHEBI:18420"/>
    </ligand>
</feature>
<feature type="binding site" description="in other chain" evidence="1">
    <location>
        <begin position="48"/>
        <end position="51"/>
    </location>
    <ligand>
        <name>IMP</name>
        <dbReference type="ChEBI" id="CHEBI:58053"/>
        <note>ligand shared between dimeric partners</note>
    </ligand>
</feature>
<feature type="binding site" evidence="1">
    <location>
        <begin position="50"/>
        <end position="52"/>
    </location>
    <ligand>
        <name>GTP</name>
        <dbReference type="ChEBI" id="CHEBI:37565"/>
    </ligand>
</feature>
<feature type="binding site" evidence="1">
    <location>
        <position position="50"/>
    </location>
    <ligand>
        <name>Mg(2+)</name>
        <dbReference type="ChEBI" id="CHEBI:18420"/>
    </ligand>
</feature>
<feature type="binding site" description="in other chain" evidence="1">
    <location>
        <position position="140"/>
    </location>
    <ligand>
        <name>IMP</name>
        <dbReference type="ChEBI" id="CHEBI:58053"/>
        <note>ligand shared between dimeric partners</note>
    </ligand>
</feature>
<feature type="binding site" evidence="1">
    <location>
        <position position="154"/>
    </location>
    <ligand>
        <name>IMP</name>
        <dbReference type="ChEBI" id="CHEBI:58053"/>
        <note>ligand shared between dimeric partners</note>
    </ligand>
</feature>
<feature type="binding site" description="in other chain" evidence="1">
    <location>
        <position position="235"/>
    </location>
    <ligand>
        <name>IMP</name>
        <dbReference type="ChEBI" id="CHEBI:58053"/>
        <note>ligand shared between dimeric partners</note>
    </ligand>
</feature>
<feature type="binding site" description="in other chain" evidence="1">
    <location>
        <position position="250"/>
    </location>
    <ligand>
        <name>IMP</name>
        <dbReference type="ChEBI" id="CHEBI:58053"/>
        <note>ligand shared between dimeric partners</note>
    </ligand>
</feature>
<feature type="binding site" evidence="1">
    <location>
        <begin position="310"/>
        <end position="316"/>
    </location>
    <ligand>
        <name>substrate</name>
    </ligand>
</feature>
<feature type="binding site" description="in other chain" evidence="1">
    <location>
        <position position="314"/>
    </location>
    <ligand>
        <name>IMP</name>
        <dbReference type="ChEBI" id="CHEBI:58053"/>
        <note>ligand shared between dimeric partners</note>
    </ligand>
</feature>
<feature type="binding site" evidence="1">
    <location>
        <position position="316"/>
    </location>
    <ligand>
        <name>GTP</name>
        <dbReference type="ChEBI" id="CHEBI:37565"/>
    </ligand>
</feature>
<feature type="binding site" evidence="1">
    <location>
        <begin position="342"/>
        <end position="344"/>
    </location>
    <ligand>
        <name>GTP</name>
        <dbReference type="ChEBI" id="CHEBI:37565"/>
    </ligand>
</feature>
<feature type="binding site" evidence="1">
    <location>
        <begin position="424"/>
        <end position="426"/>
    </location>
    <ligand>
        <name>GTP</name>
        <dbReference type="ChEBI" id="CHEBI:37565"/>
    </ligand>
</feature>
<name>PURA_CHLP8</name>
<organism>
    <name type="scientific">Chlorobaculum parvum (strain DSM 263 / NCIMB 8327)</name>
    <name type="common">Chlorobium vibrioforme subsp. thiosulfatophilum</name>
    <dbReference type="NCBI Taxonomy" id="517417"/>
    <lineage>
        <taxon>Bacteria</taxon>
        <taxon>Pseudomonadati</taxon>
        <taxon>Chlorobiota</taxon>
        <taxon>Chlorobiia</taxon>
        <taxon>Chlorobiales</taxon>
        <taxon>Chlorobiaceae</taxon>
        <taxon>Chlorobaculum</taxon>
    </lineage>
</organism>